<keyword id="KW-0002">3D-structure</keyword>
<keyword id="KW-0007">Acetylation</keyword>
<keyword id="KW-0597">Phosphoprotein</keyword>
<keyword id="KW-1185">Reference proteome</keyword>
<keyword id="KW-0677">Repeat</keyword>
<keyword id="KW-0807">Transducer</keyword>
<keyword id="KW-0853">WD repeat</keyword>
<proteinExistence type="evidence at protein level"/>
<protein>
    <recommendedName>
        <fullName>Guanine nucleotide-binding protein G(I)/G(S)/G(T) subunit beta-1</fullName>
    </recommendedName>
    <alternativeName>
        <fullName>Transducin beta chain 1</fullName>
    </alternativeName>
</protein>
<gene>
    <name type="primary">GNB1</name>
</gene>
<dbReference type="EMBL" id="X03073">
    <property type="protein sequence ID" value="CAA26875.1"/>
    <property type="molecule type" value="mRNA"/>
</dbReference>
<dbReference type="EMBL" id="M13236">
    <property type="protein sequence ID" value="AAA30792.1"/>
    <property type="molecule type" value="mRNA"/>
</dbReference>
<dbReference type="EMBL" id="BC105260">
    <property type="protein sequence ID" value="AAI05261.1"/>
    <property type="molecule type" value="mRNA"/>
</dbReference>
<dbReference type="PIR" id="A24225">
    <property type="entry name" value="RGBOB1"/>
</dbReference>
<dbReference type="RefSeq" id="NP_786971.2">
    <property type="nucleotide sequence ID" value="NM_175777.3"/>
</dbReference>
<dbReference type="RefSeq" id="XP_005217074.1">
    <property type="nucleotide sequence ID" value="XM_005217017.3"/>
</dbReference>
<dbReference type="RefSeq" id="XP_010811610.1">
    <property type="nucleotide sequence ID" value="XM_010813308.2"/>
</dbReference>
<dbReference type="PDB" id="1A0R">
    <property type="method" value="X-ray"/>
    <property type="resolution" value="2.80 A"/>
    <property type="chains" value="B=2-340"/>
</dbReference>
<dbReference type="PDB" id="1B9X">
    <property type="method" value="X-ray"/>
    <property type="resolution" value="3.00 A"/>
    <property type="chains" value="A=1-340"/>
</dbReference>
<dbReference type="PDB" id="1B9Y">
    <property type="method" value="X-ray"/>
    <property type="resolution" value="3.00 A"/>
    <property type="chains" value="A=1-340"/>
</dbReference>
<dbReference type="PDB" id="1GG2">
    <property type="method" value="X-ray"/>
    <property type="resolution" value="2.40 A"/>
    <property type="chains" value="B=1-340"/>
</dbReference>
<dbReference type="PDB" id="1GOT">
    <property type="method" value="X-ray"/>
    <property type="resolution" value="2.00 A"/>
    <property type="chains" value="B=1-340"/>
</dbReference>
<dbReference type="PDB" id="1GP2">
    <property type="method" value="X-ray"/>
    <property type="resolution" value="2.30 A"/>
    <property type="chains" value="B=1-340"/>
</dbReference>
<dbReference type="PDB" id="1OMW">
    <property type="method" value="X-ray"/>
    <property type="resolution" value="2.50 A"/>
    <property type="chains" value="B=1-340"/>
</dbReference>
<dbReference type="PDB" id="1TBG">
    <property type="method" value="X-ray"/>
    <property type="resolution" value="2.10 A"/>
    <property type="chains" value="A/B/C/D=1-340"/>
</dbReference>
<dbReference type="PDB" id="1XHM">
    <property type="method" value="X-ray"/>
    <property type="resolution" value="2.70 A"/>
    <property type="chains" value="A=1-340"/>
</dbReference>
<dbReference type="PDB" id="2BCJ">
    <property type="method" value="X-ray"/>
    <property type="resolution" value="3.06 A"/>
    <property type="chains" value="B=2-340"/>
</dbReference>
<dbReference type="PDB" id="2TRC">
    <property type="method" value="X-ray"/>
    <property type="resolution" value="2.40 A"/>
    <property type="chains" value="B=1-340"/>
</dbReference>
<dbReference type="PDB" id="3AH8">
    <property type="method" value="X-ray"/>
    <property type="resolution" value="2.90 A"/>
    <property type="chains" value="B=1-340"/>
</dbReference>
<dbReference type="PDB" id="3CIK">
    <property type="method" value="X-ray"/>
    <property type="resolution" value="2.75 A"/>
    <property type="chains" value="B=1-340"/>
</dbReference>
<dbReference type="PDB" id="3KRW">
    <property type="method" value="X-ray"/>
    <property type="resolution" value="2.90 A"/>
    <property type="chains" value="B=1-340"/>
</dbReference>
<dbReference type="PDB" id="3KRX">
    <property type="method" value="X-ray"/>
    <property type="resolution" value="3.10 A"/>
    <property type="chains" value="B=1-340"/>
</dbReference>
<dbReference type="PDB" id="3PSC">
    <property type="method" value="X-ray"/>
    <property type="resolution" value="2.67 A"/>
    <property type="chains" value="B=1-340"/>
</dbReference>
<dbReference type="PDB" id="3PVU">
    <property type="method" value="X-ray"/>
    <property type="resolution" value="2.48 A"/>
    <property type="chains" value="B=1-340"/>
</dbReference>
<dbReference type="PDB" id="3PVW">
    <property type="method" value="X-ray"/>
    <property type="resolution" value="2.49 A"/>
    <property type="chains" value="B=1-340"/>
</dbReference>
<dbReference type="PDB" id="3UZS">
    <property type="method" value="X-ray"/>
    <property type="resolution" value="4.52 A"/>
    <property type="chains" value="B=1-340"/>
</dbReference>
<dbReference type="PDB" id="3V5W">
    <property type="method" value="X-ray"/>
    <property type="resolution" value="2.07 A"/>
    <property type="chains" value="B=1-340"/>
</dbReference>
<dbReference type="PDB" id="4MK0">
    <property type="method" value="X-ray"/>
    <property type="resolution" value="2.40 A"/>
    <property type="chains" value="B=2-340"/>
</dbReference>
<dbReference type="PDB" id="5KDO">
    <property type="method" value="X-ray"/>
    <property type="resolution" value="1.90 A"/>
    <property type="chains" value="B=1-340"/>
</dbReference>
<dbReference type="PDB" id="5WG3">
    <property type="method" value="X-ray"/>
    <property type="resolution" value="2.90 A"/>
    <property type="chains" value="B=1-340"/>
</dbReference>
<dbReference type="PDB" id="5WG4">
    <property type="method" value="X-ray"/>
    <property type="resolution" value="2.31 A"/>
    <property type="chains" value="B=1-340"/>
</dbReference>
<dbReference type="PDB" id="5WG5">
    <property type="method" value="X-ray"/>
    <property type="resolution" value="3.10 A"/>
    <property type="chains" value="B=1-340"/>
</dbReference>
<dbReference type="PDB" id="6B20">
    <property type="method" value="X-ray"/>
    <property type="resolution" value="2.34 A"/>
    <property type="chains" value="A/B=3-340"/>
</dbReference>
<dbReference type="PDB" id="6C2Y">
    <property type="method" value="X-ray"/>
    <property type="resolution" value="2.74 A"/>
    <property type="chains" value="B=1-340"/>
</dbReference>
<dbReference type="PDB" id="6OY9">
    <property type="method" value="EM"/>
    <property type="resolution" value="3.90 A"/>
    <property type="chains" value="B=1-340"/>
</dbReference>
<dbReference type="PDB" id="6OYA">
    <property type="method" value="EM"/>
    <property type="resolution" value="3.30 A"/>
    <property type="chains" value="B=1-340"/>
</dbReference>
<dbReference type="PDB" id="6PCV">
    <property type="method" value="EM"/>
    <property type="resolution" value="3.20 A"/>
    <property type="chains" value="B=1-340"/>
</dbReference>
<dbReference type="PDB" id="6QNO">
    <property type="method" value="EM"/>
    <property type="resolution" value="4.38 A"/>
    <property type="chains" value="B=1-340"/>
</dbReference>
<dbReference type="PDB" id="6U7C">
    <property type="method" value="X-ray"/>
    <property type="resolution" value="2.44 A"/>
    <property type="chains" value="B=1-340"/>
</dbReference>
<dbReference type="PDB" id="7BZ2">
    <property type="method" value="EM"/>
    <property type="resolution" value="3.82 A"/>
    <property type="chains" value="B=1-340"/>
</dbReference>
<dbReference type="PDB" id="7D68">
    <property type="method" value="EM"/>
    <property type="resolution" value="3.00 A"/>
    <property type="chains" value="B=2-340"/>
</dbReference>
<dbReference type="PDB" id="7DHI">
    <property type="method" value="EM"/>
    <property type="resolution" value="3.26 A"/>
    <property type="chains" value="B=1-340"/>
</dbReference>
<dbReference type="PDB" id="7DHR">
    <property type="method" value="EM"/>
    <property type="resolution" value="3.80 A"/>
    <property type="chains" value="B=1-340"/>
</dbReference>
<dbReference type="PDB" id="7E14">
    <property type="method" value="EM"/>
    <property type="resolution" value="2.90 A"/>
    <property type="chains" value="B=2-340"/>
</dbReference>
<dbReference type="PDB" id="7JJO">
    <property type="method" value="EM"/>
    <property type="resolution" value="2.60 A"/>
    <property type="chains" value="B=2-340"/>
</dbReference>
<dbReference type="PDB" id="7O7F">
    <property type="method" value="EM"/>
    <property type="resolution" value="3.15 A"/>
    <property type="chains" value="B=1-340"/>
</dbReference>
<dbReference type="PDB" id="7PWD">
    <property type="method" value="X-ray"/>
    <property type="resolution" value="2.60 A"/>
    <property type="chains" value="B=1-340"/>
</dbReference>
<dbReference type="PDB" id="7S0F">
    <property type="method" value="EM"/>
    <property type="resolution" value="2.96 A"/>
    <property type="chains" value="B=2-340"/>
</dbReference>
<dbReference type="PDB" id="7S0G">
    <property type="method" value="EM"/>
    <property type="resolution" value="3.86 A"/>
    <property type="chains" value="B=2-340"/>
</dbReference>
<dbReference type="PDB" id="7SQO">
    <property type="method" value="EM"/>
    <property type="resolution" value="3.17 A"/>
    <property type="chains" value="B=2-340"/>
</dbReference>
<dbReference type="PDB" id="7TD0">
    <property type="method" value="EM"/>
    <property type="resolution" value="2.83 A"/>
    <property type="chains" value="B=1-340"/>
</dbReference>
<dbReference type="PDB" id="7TD1">
    <property type="method" value="EM"/>
    <property type="resolution" value="3.08 A"/>
    <property type="chains" value="B=1-340"/>
</dbReference>
<dbReference type="PDB" id="7TD2">
    <property type="method" value="EM"/>
    <property type="resolution" value="3.11 A"/>
    <property type="chains" value="B=1-340"/>
</dbReference>
<dbReference type="PDB" id="7TD3">
    <property type="method" value="EM"/>
    <property type="resolution" value="3.00 A"/>
    <property type="chains" value="B=1-340"/>
</dbReference>
<dbReference type="PDB" id="7TD4">
    <property type="method" value="EM"/>
    <property type="resolution" value="2.60 A"/>
    <property type="chains" value="B=1-340"/>
</dbReference>
<dbReference type="PDB" id="7X1T">
    <property type="method" value="EM"/>
    <property type="resolution" value="3.26 A"/>
    <property type="chains" value="C=1-340"/>
</dbReference>
<dbReference type="PDB" id="7X1U">
    <property type="method" value="EM"/>
    <property type="resolution" value="3.19 A"/>
    <property type="chains" value="C=1-340"/>
</dbReference>
<dbReference type="PDB" id="7XAT">
    <property type="method" value="EM"/>
    <property type="resolution" value="2.85 A"/>
    <property type="chains" value="C=2-340"/>
</dbReference>
<dbReference type="PDB" id="7XAU">
    <property type="method" value="EM"/>
    <property type="resolution" value="2.97 A"/>
    <property type="chains" value="C=2-340"/>
</dbReference>
<dbReference type="PDB" id="7XAV">
    <property type="method" value="EM"/>
    <property type="resolution" value="2.87 A"/>
    <property type="chains" value="C=2-340"/>
</dbReference>
<dbReference type="PDB" id="7YJ4">
    <property type="method" value="EM"/>
    <property type="resolution" value="3.19 A"/>
    <property type="chains" value="T=2-340"/>
</dbReference>
<dbReference type="PDB" id="8DCR">
    <property type="method" value="EM"/>
    <property type="resolution" value="2.60 A"/>
    <property type="chains" value="B=2-340"/>
</dbReference>
<dbReference type="PDB" id="8DCS">
    <property type="method" value="EM"/>
    <property type="resolution" value="2.50 A"/>
    <property type="chains" value="B=2-340"/>
</dbReference>
<dbReference type="PDB" id="8P12">
    <property type="method" value="EM"/>
    <property type="resolution" value="3.21 A"/>
    <property type="chains" value="B=1-340"/>
</dbReference>
<dbReference type="PDB" id="8P13">
    <property type="method" value="EM"/>
    <property type="resolution" value="5.20 A"/>
    <property type="chains" value="B=1-340"/>
</dbReference>
<dbReference type="PDB" id="8P15">
    <property type="method" value="EM"/>
    <property type="resolution" value="5.90 A"/>
    <property type="chains" value="B=1-340"/>
</dbReference>
<dbReference type="PDB" id="8SOC">
    <property type="method" value="EM"/>
    <property type="resolution" value="3.50 A"/>
    <property type="chains" value="C=1-340"/>
</dbReference>
<dbReference type="PDB" id="8SOD">
    <property type="method" value="EM"/>
    <property type="resolution" value="3.40 A"/>
    <property type="chains" value="C/E=1-340"/>
</dbReference>
<dbReference type="PDB" id="8SOE">
    <property type="method" value="EM"/>
    <property type="resolution" value="3.60 A"/>
    <property type="chains" value="C/E=1-340"/>
</dbReference>
<dbReference type="PDB" id="8YH0">
    <property type="method" value="EM"/>
    <property type="resolution" value="2.86 A"/>
    <property type="chains" value="B=2-340"/>
</dbReference>
<dbReference type="PDB" id="8YH2">
    <property type="method" value="EM"/>
    <property type="resolution" value="3.27 A"/>
    <property type="chains" value="B=2-340"/>
</dbReference>
<dbReference type="PDB" id="8YH3">
    <property type="method" value="EM"/>
    <property type="resolution" value="3.40 A"/>
    <property type="chains" value="B=2-340"/>
</dbReference>
<dbReference type="PDB" id="8YH5">
    <property type="method" value="EM"/>
    <property type="resolution" value="3.66 A"/>
    <property type="chains" value="B=2-340"/>
</dbReference>
<dbReference type="PDB" id="8YH6">
    <property type="method" value="EM"/>
    <property type="resolution" value="3.62 A"/>
    <property type="chains" value="B=2-340"/>
</dbReference>
<dbReference type="PDB" id="9CBL">
    <property type="method" value="EM"/>
    <property type="resolution" value="2.80 A"/>
    <property type="chains" value="B=2-340"/>
</dbReference>
<dbReference type="PDB" id="9CBM">
    <property type="method" value="EM"/>
    <property type="resolution" value="3.20 A"/>
    <property type="chains" value="B=2-340"/>
</dbReference>
<dbReference type="PDB" id="9EPR">
    <property type="method" value="EM"/>
    <property type="resolution" value="4.90 A"/>
    <property type="chains" value="B=1-340"/>
</dbReference>
<dbReference type="PDBsum" id="1A0R"/>
<dbReference type="PDBsum" id="1B9X"/>
<dbReference type="PDBsum" id="1B9Y"/>
<dbReference type="PDBsum" id="1GG2"/>
<dbReference type="PDBsum" id="1GOT"/>
<dbReference type="PDBsum" id="1GP2"/>
<dbReference type="PDBsum" id="1OMW"/>
<dbReference type="PDBsum" id="1TBG"/>
<dbReference type="PDBsum" id="1XHM"/>
<dbReference type="PDBsum" id="2BCJ"/>
<dbReference type="PDBsum" id="2TRC"/>
<dbReference type="PDBsum" id="3AH8"/>
<dbReference type="PDBsum" id="3CIK"/>
<dbReference type="PDBsum" id="3KRW"/>
<dbReference type="PDBsum" id="3KRX"/>
<dbReference type="PDBsum" id="3PSC"/>
<dbReference type="PDBsum" id="3PVU"/>
<dbReference type="PDBsum" id="3PVW"/>
<dbReference type="PDBsum" id="3UZS"/>
<dbReference type="PDBsum" id="3V5W"/>
<dbReference type="PDBsum" id="4MK0"/>
<dbReference type="PDBsum" id="5KDO"/>
<dbReference type="PDBsum" id="5WG3"/>
<dbReference type="PDBsum" id="5WG4"/>
<dbReference type="PDBsum" id="5WG5"/>
<dbReference type="PDBsum" id="6B20"/>
<dbReference type="PDBsum" id="6C2Y"/>
<dbReference type="PDBsum" id="6OY9"/>
<dbReference type="PDBsum" id="6OYA"/>
<dbReference type="PDBsum" id="6PCV"/>
<dbReference type="PDBsum" id="6QNO"/>
<dbReference type="PDBsum" id="6U7C"/>
<dbReference type="PDBsum" id="7BZ2"/>
<dbReference type="PDBsum" id="7D68"/>
<dbReference type="PDBsum" id="7DHI"/>
<dbReference type="PDBsum" id="7DHR"/>
<dbReference type="PDBsum" id="7E14"/>
<dbReference type="PDBsum" id="7JJO"/>
<dbReference type="PDBsum" id="7O7F"/>
<dbReference type="PDBsum" id="7PWD"/>
<dbReference type="PDBsum" id="7S0F"/>
<dbReference type="PDBsum" id="7S0G"/>
<dbReference type="PDBsum" id="7SQO"/>
<dbReference type="PDBsum" id="7TD0"/>
<dbReference type="PDBsum" id="7TD1"/>
<dbReference type="PDBsum" id="7TD2"/>
<dbReference type="PDBsum" id="7TD3"/>
<dbReference type="PDBsum" id="7TD4"/>
<dbReference type="PDBsum" id="7X1T"/>
<dbReference type="PDBsum" id="7X1U"/>
<dbReference type="PDBsum" id="7XAT"/>
<dbReference type="PDBsum" id="7XAU"/>
<dbReference type="PDBsum" id="7XAV"/>
<dbReference type="PDBsum" id="7YJ4"/>
<dbReference type="PDBsum" id="8DCR"/>
<dbReference type="PDBsum" id="8DCS"/>
<dbReference type="PDBsum" id="8P12"/>
<dbReference type="PDBsum" id="8P13"/>
<dbReference type="PDBsum" id="8P15"/>
<dbReference type="PDBsum" id="8SOC"/>
<dbReference type="PDBsum" id="8SOD"/>
<dbReference type="PDBsum" id="8SOE"/>
<dbReference type="PDBsum" id="8YH0"/>
<dbReference type="PDBsum" id="8YH2"/>
<dbReference type="PDBsum" id="8YH3"/>
<dbReference type="PDBsum" id="8YH5"/>
<dbReference type="PDBsum" id="8YH6"/>
<dbReference type="PDBsum" id="9CBL"/>
<dbReference type="PDBsum" id="9CBM"/>
<dbReference type="PDBsum" id="9EPR"/>
<dbReference type="EMDB" id="EMD-12746"/>
<dbReference type="EMDB" id="EMD-17343"/>
<dbReference type="EMDB" id="EMD-17344"/>
<dbReference type="EMDB" id="EMD-17345"/>
<dbReference type="EMDB" id="EMD-19884"/>
<dbReference type="EMDB" id="EMD-20222"/>
<dbReference type="EMDB" id="EMD-20223"/>
<dbReference type="EMDB" id="EMD-20308"/>
<dbReference type="EMDB" id="EMD-22357"/>
<dbReference type="EMDB" id="EMD-24789"/>
<dbReference type="EMDB" id="EMD-24790"/>
<dbReference type="EMDB" id="EMD-25389"/>
<dbReference type="EMDB" id="EMD-25819"/>
<dbReference type="EMDB" id="EMD-25820"/>
<dbReference type="EMDB" id="EMD-25821"/>
<dbReference type="EMDB" id="EMD-25822"/>
<dbReference type="EMDB" id="EMD-25823"/>
<dbReference type="EMDB" id="EMD-27328"/>
<dbReference type="EMDB" id="EMD-27329"/>
<dbReference type="EMDB" id="EMD-30249"/>
<dbReference type="EMDB" id="EMD-30590"/>
<dbReference type="EMDB" id="EMD-30681"/>
<dbReference type="EMDB" id="EMD-30682"/>
<dbReference type="EMDB" id="EMD-32949"/>
<dbReference type="EMDB" id="EMD-32950"/>
<dbReference type="EMDB" id="EMD-33098"/>
<dbReference type="EMDB" id="EMD-33099"/>
<dbReference type="EMDB" id="EMD-33100"/>
<dbReference type="EMDB" id="EMD-33871"/>
<dbReference type="EMDB" id="EMD-39278"/>
<dbReference type="EMDB" id="EMD-39279"/>
<dbReference type="EMDB" id="EMD-39280"/>
<dbReference type="EMDB" id="EMD-39281"/>
<dbReference type="EMDB" id="EMD-39282"/>
<dbReference type="EMDB" id="EMD-40653"/>
<dbReference type="EMDB" id="EMD-40654"/>
<dbReference type="EMDB" id="EMD-40655"/>
<dbReference type="EMDB" id="EMD-45425"/>
<dbReference type="EMDB" id="EMD-45426"/>
<dbReference type="EMDB" id="EMD-4598"/>
<dbReference type="SMR" id="P62871"/>
<dbReference type="BioGRID" id="158560">
    <property type="interactions" value="6"/>
</dbReference>
<dbReference type="CORUM" id="P62871"/>
<dbReference type="DIP" id="DIP-29227N"/>
<dbReference type="FunCoup" id="P62871">
    <property type="interactions" value="2242"/>
</dbReference>
<dbReference type="IntAct" id="P62871">
    <property type="interactions" value="11"/>
</dbReference>
<dbReference type="MINT" id="P62871"/>
<dbReference type="STRING" id="9913.ENSBTAP00000056741"/>
<dbReference type="iPTMnet" id="P62871"/>
<dbReference type="PaxDb" id="9913-ENSBTAP00000042481"/>
<dbReference type="PeptideAtlas" id="P62871"/>
<dbReference type="ABCD" id="P62871">
    <property type="antibodies" value="5 sequenced antibodies"/>
</dbReference>
<dbReference type="Ensembl" id="ENSBTAT00000045065.3">
    <property type="protein sequence ID" value="ENSBTAP00000042481.1"/>
    <property type="gene ID" value="ENSBTAG00000000215.6"/>
</dbReference>
<dbReference type="GeneID" id="281201"/>
<dbReference type="KEGG" id="bta:281201"/>
<dbReference type="CTD" id="2782"/>
<dbReference type="VEuPathDB" id="HostDB:ENSBTAG00000000215"/>
<dbReference type="VGNC" id="VGNC:29457">
    <property type="gene designation" value="GNB1"/>
</dbReference>
<dbReference type="eggNOG" id="KOG0286">
    <property type="taxonomic scope" value="Eukaryota"/>
</dbReference>
<dbReference type="GeneTree" id="ENSGT01000000214413"/>
<dbReference type="HOGENOM" id="CLU_000288_57_34_1"/>
<dbReference type="InParanoid" id="P62871"/>
<dbReference type="OMA" id="PLDSQWV"/>
<dbReference type="OrthoDB" id="10255630at2759"/>
<dbReference type="TreeFam" id="TF106149"/>
<dbReference type="Reactome" id="R-BTA-1296041">
    <property type="pathway name" value="Activation of G protein gated Potassium channels"/>
</dbReference>
<dbReference type="Reactome" id="R-BTA-202040">
    <property type="pathway name" value="G-protein activation"/>
</dbReference>
<dbReference type="Reactome" id="R-BTA-2485179">
    <property type="pathway name" value="Activation of the phototransduction cascade"/>
</dbReference>
<dbReference type="Reactome" id="R-BTA-381676">
    <property type="pathway name" value="Glucagon-like Peptide-1 (GLP1) regulates insulin secretion"/>
</dbReference>
<dbReference type="Reactome" id="R-BTA-381753">
    <property type="pathway name" value="Olfactory Signaling Pathway"/>
</dbReference>
<dbReference type="Reactome" id="R-BTA-381771">
    <property type="pathway name" value="Synthesis, secretion, and inactivation of Glucagon-like Peptide-1 (GLP-1)"/>
</dbReference>
<dbReference type="Reactome" id="R-BTA-392170">
    <property type="pathway name" value="ADP signalling through P2Y purinoceptor 12"/>
</dbReference>
<dbReference type="Reactome" id="R-BTA-392451">
    <property type="pathway name" value="G beta:gamma signalling through PI3Kgamma"/>
</dbReference>
<dbReference type="Reactome" id="R-BTA-392851">
    <property type="pathway name" value="Prostacyclin signalling through prostacyclin receptor"/>
</dbReference>
<dbReference type="Reactome" id="R-BTA-400042">
    <property type="pathway name" value="Adrenaline,noradrenaline inhibits insulin secretion"/>
</dbReference>
<dbReference type="Reactome" id="R-BTA-4086398">
    <property type="pathway name" value="Ca2+ pathway"/>
</dbReference>
<dbReference type="Reactome" id="R-BTA-416476">
    <property type="pathway name" value="G alpha (q) signalling events"/>
</dbReference>
<dbReference type="Reactome" id="R-BTA-416482">
    <property type="pathway name" value="G alpha (12/13) signalling events"/>
</dbReference>
<dbReference type="Reactome" id="R-BTA-418217">
    <property type="pathway name" value="G beta:gamma signalling through PLC beta"/>
</dbReference>
<dbReference type="Reactome" id="R-BTA-418555">
    <property type="pathway name" value="G alpha (s) signalling events"/>
</dbReference>
<dbReference type="Reactome" id="R-BTA-418592">
    <property type="pathway name" value="ADP signalling through P2Y purinoceptor 1"/>
</dbReference>
<dbReference type="Reactome" id="R-BTA-418594">
    <property type="pathway name" value="G alpha (i) signalling events"/>
</dbReference>
<dbReference type="Reactome" id="R-BTA-418597">
    <property type="pathway name" value="G alpha (z) signalling events"/>
</dbReference>
<dbReference type="Reactome" id="R-BTA-420092">
    <property type="pathway name" value="Glucagon-type ligand receptors"/>
</dbReference>
<dbReference type="Reactome" id="R-BTA-428930">
    <property type="pathway name" value="Thromboxane signalling through TP receptor"/>
</dbReference>
<dbReference type="Reactome" id="R-BTA-432040">
    <property type="pathway name" value="Vasopressin regulates renal water homeostasis via Aquaporins"/>
</dbReference>
<dbReference type="Reactome" id="R-BTA-456926">
    <property type="pathway name" value="Thrombin signalling through proteinase activated receptors (PARs)"/>
</dbReference>
<dbReference type="Reactome" id="R-BTA-500657">
    <property type="pathway name" value="Presynaptic function of Kainate receptors"/>
</dbReference>
<dbReference type="Reactome" id="R-BTA-6814122">
    <property type="pathway name" value="Cooperation of PDCL (PhLP1) and TRiC/CCT in G-protein beta folding"/>
</dbReference>
<dbReference type="Reactome" id="R-BTA-8964315">
    <property type="pathway name" value="G beta:gamma signalling through BTK"/>
</dbReference>
<dbReference type="Reactome" id="R-BTA-8964616">
    <property type="pathway name" value="G beta:gamma signalling through CDC42"/>
</dbReference>
<dbReference type="Reactome" id="R-BTA-9009391">
    <property type="pathway name" value="Extra-nuclear estrogen signaling"/>
</dbReference>
<dbReference type="Reactome" id="R-BTA-9717207">
    <property type="pathway name" value="Sensory perception of sweet, bitter, and umami (glutamate) taste"/>
</dbReference>
<dbReference type="Reactome" id="R-BTA-9856530">
    <property type="pathway name" value="High laminar flow shear stress activates signaling by PIEZO1 and PECAM1:CDH5:KDR in endothelial cells"/>
</dbReference>
<dbReference type="Reactome" id="R-BTA-997272">
    <property type="pathway name" value="Inhibition of voltage gated Ca2+ channels via Gbeta/gamma subunits"/>
</dbReference>
<dbReference type="EvolutionaryTrace" id="P62871"/>
<dbReference type="PRO" id="PR:P62871"/>
<dbReference type="Proteomes" id="UP000009136">
    <property type="component" value="Chromosome 16"/>
</dbReference>
<dbReference type="Bgee" id="ENSBTAG00000000215">
    <property type="expression patterns" value="Expressed in retina and 102 other cell types or tissues"/>
</dbReference>
<dbReference type="GO" id="GO:0005737">
    <property type="term" value="C:cytoplasm"/>
    <property type="evidence" value="ECO:0000318"/>
    <property type="project" value="GO_Central"/>
</dbReference>
<dbReference type="GO" id="GO:0005834">
    <property type="term" value="C:heterotrimeric G-protein complex"/>
    <property type="evidence" value="ECO:0000314"/>
    <property type="project" value="BHF-UCL"/>
</dbReference>
<dbReference type="GO" id="GO:0016020">
    <property type="term" value="C:membrane"/>
    <property type="evidence" value="ECO:0000314"/>
    <property type="project" value="BHF-UCL"/>
</dbReference>
<dbReference type="GO" id="GO:0097381">
    <property type="term" value="C:photoreceptor disc membrane"/>
    <property type="evidence" value="ECO:0000304"/>
    <property type="project" value="Reactome"/>
</dbReference>
<dbReference type="GO" id="GO:0045202">
    <property type="term" value="C:synapse"/>
    <property type="evidence" value="ECO:0007669"/>
    <property type="project" value="Ensembl"/>
</dbReference>
<dbReference type="GO" id="GO:0003924">
    <property type="term" value="F:GTPase activity"/>
    <property type="evidence" value="ECO:0007669"/>
    <property type="project" value="Ensembl"/>
</dbReference>
<dbReference type="GO" id="GO:0051020">
    <property type="term" value="F:GTPase binding"/>
    <property type="evidence" value="ECO:0007669"/>
    <property type="project" value="Ensembl"/>
</dbReference>
<dbReference type="GO" id="GO:0044877">
    <property type="term" value="F:protein-containing complex binding"/>
    <property type="evidence" value="ECO:0007669"/>
    <property type="project" value="Ensembl"/>
</dbReference>
<dbReference type="GO" id="GO:0030159">
    <property type="term" value="F:signaling receptor complex adaptor activity"/>
    <property type="evidence" value="ECO:0000318"/>
    <property type="project" value="GO_Central"/>
</dbReference>
<dbReference type="GO" id="GO:0007191">
    <property type="term" value="P:adenylate cyclase-activating dopamine receptor signaling pathway"/>
    <property type="evidence" value="ECO:0000314"/>
    <property type="project" value="BHF-UCL"/>
</dbReference>
<dbReference type="GO" id="GO:0008283">
    <property type="term" value="P:cell population proliferation"/>
    <property type="evidence" value="ECO:0007669"/>
    <property type="project" value="Ensembl"/>
</dbReference>
<dbReference type="GO" id="GO:0071870">
    <property type="term" value="P:cellular response to catecholamine stimulus"/>
    <property type="evidence" value="ECO:0000314"/>
    <property type="project" value="BHF-UCL"/>
</dbReference>
<dbReference type="GO" id="GO:0071380">
    <property type="term" value="P:cellular response to prostaglandin E stimulus"/>
    <property type="evidence" value="ECO:0000314"/>
    <property type="project" value="BHF-UCL"/>
</dbReference>
<dbReference type="GO" id="GO:0007186">
    <property type="term" value="P:G protein-coupled receptor signaling pathway"/>
    <property type="evidence" value="ECO:0000318"/>
    <property type="project" value="GO_Central"/>
</dbReference>
<dbReference type="GO" id="GO:0007200">
    <property type="term" value="P:phospholipase C-activating G protein-coupled receptor signaling pathway"/>
    <property type="evidence" value="ECO:0007669"/>
    <property type="project" value="Ensembl"/>
</dbReference>
<dbReference type="GO" id="GO:0060041">
    <property type="term" value="P:retina development in camera-type eye"/>
    <property type="evidence" value="ECO:0007669"/>
    <property type="project" value="Ensembl"/>
</dbReference>
<dbReference type="GO" id="GO:0050909">
    <property type="term" value="P:sensory perception of taste"/>
    <property type="evidence" value="ECO:0007669"/>
    <property type="project" value="Ensembl"/>
</dbReference>
<dbReference type="CDD" id="cd00200">
    <property type="entry name" value="WD40"/>
    <property type="match status" value="1"/>
</dbReference>
<dbReference type="FunFam" id="2.130.10.10:FF:000007">
    <property type="entry name" value="Guanine nucleotide-binding protein G(I)/G(S)/G(T) subunit beta-1"/>
    <property type="match status" value="1"/>
</dbReference>
<dbReference type="Gene3D" id="2.130.10.10">
    <property type="entry name" value="YVTN repeat-like/Quinoprotein amine dehydrogenase"/>
    <property type="match status" value="1"/>
</dbReference>
<dbReference type="InterPro" id="IPR020472">
    <property type="entry name" value="G-protein_beta_WD-40_rep"/>
</dbReference>
<dbReference type="InterPro" id="IPR001632">
    <property type="entry name" value="Gprotein_B"/>
</dbReference>
<dbReference type="InterPro" id="IPR016346">
    <property type="entry name" value="Guanine_nucleotide-bd_bsu"/>
</dbReference>
<dbReference type="InterPro" id="IPR015943">
    <property type="entry name" value="WD40/YVTN_repeat-like_dom_sf"/>
</dbReference>
<dbReference type="InterPro" id="IPR019775">
    <property type="entry name" value="WD40_repeat_CS"/>
</dbReference>
<dbReference type="InterPro" id="IPR036322">
    <property type="entry name" value="WD40_repeat_dom_sf"/>
</dbReference>
<dbReference type="InterPro" id="IPR001680">
    <property type="entry name" value="WD40_rpt"/>
</dbReference>
<dbReference type="PANTHER" id="PTHR19850">
    <property type="entry name" value="GUANINE NUCLEOTIDE-BINDING PROTEIN BETA G PROTEIN BETA"/>
    <property type="match status" value="1"/>
</dbReference>
<dbReference type="Pfam" id="PF25391">
    <property type="entry name" value="WD40_Gbeta"/>
    <property type="match status" value="1"/>
</dbReference>
<dbReference type="PIRSF" id="PIRSF002394">
    <property type="entry name" value="GN-bd_beta"/>
    <property type="match status" value="1"/>
</dbReference>
<dbReference type="PRINTS" id="PR00319">
    <property type="entry name" value="GPROTEINB"/>
</dbReference>
<dbReference type="PRINTS" id="PR00320">
    <property type="entry name" value="GPROTEINBRPT"/>
</dbReference>
<dbReference type="SMART" id="SM00320">
    <property type="entry name" value="WD40"/>
    <property type="match status" value="7"/>
</dbReference>
<dbReference type="SUPFAM" id="SSF50978">
    <property type="entry name" value="WD40 repeat-like"/>
    <property type="match status" value="1"/>
</dbReference>
<dbReference type="PROSITE" id="PS00678">
    <property type="entry name" value="WD_REPEATS_1"/>
    <property type="match status" value="3"/>
</dbReference>
<dbReference type="PROSITE" id="PS50082">
    <property type="entry name" value="WD_REPEATS_2"/>
    <property type="match status" value="6"/>
</dbReference>
<dbReference type="PROSITE" id="PS50294">
    <property type="entry name" value="WD_REPEATS_REGION"/>
    <property type="match status" value="1"/>
</dbReference>
<organism>
    <name type="scientific">Bos taurus</name>
    <name type="common">Bovine</name>
    <dbReference type="NCBI Taxonomy" id="9913"/>
    <lineage>
        <taxon>Eukaryota</taxon>
        <taxon>Metazoa</taxon>
        <taxon>Chordata</taxon>
        <taxon>Craniata</taxon>
        <taxon>Vertebrata</taxon>
        <taxon>Euteleostomi</taxon>
        <taxon>Mammalia</taxon>
        <taxon>Eutheria</taxon>
        <taxon>Laurasiatheria</taxon>
        <taxon>Artiodactyla</taxon>
        <taxon>Ruminantia</taxon>
        <taxon>Pecora</taxon>
        <taxon>Bovidae</taxon>
        <taxon>Bovinae</taxon>
        <taxon>Bos</taxon>
    </lineage>
</organism>
<accession>P62871</accession>
<accession>P04697</accession>
<accession>P04901</accession>
<accession>Q3MHF1</accession>
<feature type="initiator methionine" description="Removed" evidence="1">
    <location>
        <position position="1"/>
    </location>
</feature>
<feature type="chain" id="PRO_0000127684" description="Guanine nucleotide-binding protein G(I)/G(S)/G(T) subunit beta-1">
    <location>
        <begin position="2"/>
        <end position="340"/>
    </location>
</feature>
<feature type="repeat" description="WD 1" evidence="1">
    <location>
        <begin position="46"/>
        <end position="94"/>
    </location>
</feature>
<feature type="repeat" description="WD 2" evidence="1">
    <location>
        <begin position="95"/>
        <end position="140"/>
    </location>
</feature>
<feature type="repeat" description="WD 3" evidence="1">
    <location>
        <begin position="141"/>
        <end position="181"/>
    </location>
</feature>
<feature type="repeat" description="WD 4" evidence="1">
    <location>
        <begin position="182"/>
        <end position="223"/>
    </location>
</feature>
<feature type="repeat" description="WD 5" evidence="1">
    <location>
        <begin position="224"/>
        <end position="267"/>
    </location>
</feature>
<feature type="repeat" description="WD 6" evidence="1">
    <location>
        <begin position="268"/>
        <end position="309"/>
    </location>
</feature>
<feature type="repeat" description="WD 7" evidence="1">
    <location>
        <begin position="310"/>
        <end position="340"/>
    </location>
</feature>
<feature type="modified residue" description="N-acetylserine" evidence="1">
    <location>
        <position position="2"/>
    </location>
</feature>
<feature type="modified residue" description="Phosphoserine" evidence="1">
    <location>
        <position position="2"/>
    </location>
</feature>
<feature type="modified residue" description="Phosphohistidine" evidence="2">
    <location>
        <position position="266"/>
    </location>
</feature>
<feature type="sequence conflict" description="In Ref. 2; CAA26875." evidence="5" ref="2">
    <original>V</original>
    <variation>L</variation>
    <location>
        <position position="71"/>
    </location>
</feature>
<feature type="helix" evidence="8">
    <location>
        <begin position="3"/>
        <end position="24"/>
    </location>
</feature>
<feature type="helix" evidence="8">
    <location>
        <begin position="30"/>
        <end position="33"/>
    </location>
</feature>
<feature type="turn" evidence="8">
    <location>
        <begin position="34"/>
        <end position="36"/>
    </location>
</feature>
<feature type="strand" evidence="8">
    <location>
        <begin position="46"/>
        <end position="51"/>
    </location>
</feature>
<feature type="strand" evidence="8">
    <location>
        <begin position="58"/>
        <end position="63"/>
    </location>
</feature>
<feature type="strand" evidence="8">
    <location>
        <begin position="67"/>
        <end position="74"/>
    </location>
</feature>
<feature type="turn" evidence="8">
    <location>
        <begin position="75"/>
        <end position="77"/>
    </location>
</feature>
<feature type="strand" evidence="8">
    <location>
        <begin position="78"/>
        <end position="83"/>
    </location>
</feature>
<feature type="turn" evidence="8">
    <location>
        <begin position="84"/>
        <end position="87"/>
    </location>
</feature>
<feature type="strand" evidence="8">
    <location>
        <begin position="88"/>
        <end position="94"/>
    </location>
</feature>
<feature type="strand" evidence="8">
    <location>
        <begin position="96"/>
        <end position="98"/>
    </location>
</feature>
<feature type="strand" evidence="8">
    <location>
        <begin position="100"/>
        <end position="105"/>
    </location>
</feature>
<feature type="turn" evidence="12">
    <location>
        <begin position="106"/>
        <end position="108"/>
    </location>
</feature>
<feature type="strand" evidence="8">
    <location>
        <begin position="109"/>
        <end position="116"/>
    </location>
</feature>
<feature type="turn" evidence="13">
    <location>
        <begin position="117"/>
        <end position="119"/>
    </location>
</feature>
<feature type="strand" evidence="8">
    <location>
        <begin position="121"/>
        <end position="126"/>
    </location>
</feature>
<feature type="strand" evidence="6">
    <location>
        <begin position="130"/>
        <end position="132"/>
    </location>
</feature>
<feature type="strand" evidence="8">
    <location>
        <begin position="134"/>
        <end position="139"/>
    </location>
</feature>
<feature type="strand" evidence="8">
    <location>
        <begin position="146"/>
        <end position="153"/>
    </location>
</feature>
<feature type="strand" evidence="8">
    <location>
        <begin position="156"/>
        <end position="161"/>
    </location>
</feature>
<feature type="turn" evidence="14">
    <location>
        <begin position="162"/>
        <end position="164"/>
    </location>
</feature>
<feature type="strand" evidence="8">
    <location>
        <begin position="166"/>
        <end position="170"/>
    </location>
</feature>
<feature type="turn" evidence="8">
    <location>
        <begin position="171"/>
        <end position="174"/>
    </location>
</feature>
<feature type="strand" evidence="8">
    <location>
        <begin position="175"/>
        <end position="180"/>
    </location>
</feature>
<feature type="strand" evidence="8">
    <location>
        <begin position="187"/>
        <end position="192"/>
    </location>
</feature>
<feature type="strand" evidence="8">
    <location>
        <begin position="196"/>
        <end position="203"/>
    </location>
</feature>
<feature type="turn" evidence="11">
    <location>
        <begin position="204"/>
        <end position="206"/>
    </location>
</feature>
<feature type="strand" evidence="8">
    <location>
        <begin position="208"/>
        <end position="212"/>
    </location>
</feature>
<feature type="turn" evidence="8">
    <location>
        <begin position="213"/>
        <end position="216"/>
    </location>
</feature>
<feature type="strand" evidence="8">
    <location>
        <begin position="217"/>
        <end position="222"/>
    </location>
</feature>
<feature type="strand" evidence="8">
    <location>
        <begin position="229"/>
        <end position="234"/>
    </location>
</feature>
<feature type="strand" evidence="8">
    <location>
        <begin position="238"/>
        <end position="245"/>
    </location>
</feature>
<feature type="strand" evidence="8">
    <location>
        <begin position="250"/>
        <end position="254"/>
    </location>
</feature>
<feature type="turn" evidence="8">
    <location>
        <begin position="255"/>
        <end position="258"/>
    </location>
</feature>
<feature type="strand" evidence="8">
    <location>
        <begin position="259"/>
        <end position="264"/>
    </location>
</feature>
<feature type="strand" evidence="8">
    <location>
        <begin position="273"/>
        <end position="278"/>
    </location>
</feature>
<feature type="strand" evidence="8">
    <location>
        <begin position="282"/>
        <end position="289"/>
    </location>
</feature>
<feature type="turn" evidence="11">
    <location>
        <begin position="290"/>
        <end position="292"/>
    </location>
</feature>
<feature type="strand" evidence="8">
    <location>
        <begin position="294"/>
        <end position="298"/>
    </location>
</feature>
<feature type="turn" evidence="8">
    <location>
        <begin position="299"/>
        <end position="301"/>
    </location>
</feature>
<feature type="strand" evidence="8">
    <location>
        <begin position="304"/>
        <end position="308"/>
    </location>
</feature>
<feature type="helix" evidence="7">
    <location>
        <begin position="309"/>
        <end position="311"/>
    </location>
</feature>
<feature type="strand" evidence="8">
    <location>
        <begin position="315"/>
        <end position="320"/>
    </location>
</feature>
<feature type="strand" evidence="10">
    <location>
        <begin position="322"/>
        <end position="325"/>
    </location>
</feature>
<feature type="strand" evidence="8">
    <location>
        <begin position="327"/>
        <end position="331"/>
    </location>
</feature>
<feature type="strand" evidence="9">
    <location>
        <begin position="332"/>
        <end position="334"/>
    </location>
</feature>
<feature type="strand" evidence="8">
    <location>
        <begin position="336"/>
        <end position="340"/>
    </location>
</feature>
<reference key="1">
    <citation type="journal article" date="1986" name="Proc. Natl. Acad. Sci. U.S.A.">
        <title>Repetitive segmental structure of the transducin beta subunit: homology with the CDC4 gene and identification of related mRNAs.</title>
        <authorList>
            <person name="Fong H.K.W."/>
            <person name="Hurley J.B."/>
            <person name="Hopkins R.S."/>
            <person name="Miake-Lye R."/>
            <person name="Johnson M.S."/>
            <person name="Doolittle R.F."/>
            <person name="Simon M.I."/>
        </authorList>
    </citation>
    <scope>NUCLEOTIDE SEQUENCE [MRNA]</scope>
</reference>
<reference key="2">
    <citation type="journal article" date="1985" name="FEBS Lett.">
        <title>Primary structure of the beta-subunit of bovine transducin deduced from the cDNA sequence.</title>
        <authorList>
            <person name="Sugimoto K."/>
            <person name="Nukada T."/>
            <person name="Tanabe T."/>
            <person name="Takahashi H."/>
            <person name="Noda M."/>
            <person name="Minamino N."/>
            <person name="Kangawa K."/>
            <person name="Matsuo H."/>
            <person name="Hirose T."/>
            <person name="Inayama S."/>
            <person name="Numa S."/>
        </authorList>
    </citation>
    <scope>NUCLEOTIDE SEQUENCE [MRNA]</scope>
</reference>
<reference key="3">
    <citation type="submission" date="2005-09" db="EMBL/GenBank/DDBJ databases">
        <authorList>
            <consortium name="NIH - Mammalian Gene Collection (MGC) project"/>
        </authorList>
    </citation>
    <scope>NUCLEOTIDE SEQUENCE [LARGE SCALE MRNA]</scope>
    <source>
        <strain>Hereford</strain>
        <tissue>Ascending colon</tissue>
    </source>
</reference>
<reference key="4">
    <citation type="journal article" date="2003" name="J. Biol. Chem.">
        <title>Activation of heterotrimeric G proteins by a high energy phosphate transfer via nucleoside diphosphate kinase (NDPK) B and Gbeta subunits. Complex formation of NDPK B with Gbeta gamma dimers and phosphorylation of His-266 IN Gbeta.</title>
        <authorList>
            <person name="Cuello F."/>
            <person name="Schulze R.A."/>
            <person name="Heemeyer F."/>
            <person name="Meyer H.E."/>
            <person name="Lutz S."/>
            <person name="Jakobs K.H."/>
            <person name="Niroomand F."/>
            <person name="Wieland T."/>
        </authorList>
    </citation>
    <scope>PHOSPHORYLATION AT HIS-266</scope>
</reference>
<reference key="5">
    <citation type="journal article" date="1995" name="Cell">
        <title>The structure of the G protein heterotrimer Gi alpha 1 beta 1 gamma 2.</title>
        <authorList>
            <person name="Wall M.A."/>
            <person name="Coleman D.E."/>
            <person name="Lee E."/>
            <person name="Iniguez-Lluhi J.A."/>
            <person name="Posner B.A."/>
            <person name="Gilman A.G."/>
            <person name="Sprang S.R."/>
        </authorList>
    </citation>
    <scope>X-RAY CRYSTALLOGRAPHY (2.3 ANGSTROMS) OF HETEROTRIMER</scope>
</reference>
<reference key="6">
    <citation type="journal article" date="1996" name="Nature">
        <title>Crystal structure of a G-protein beta gamma dimer at 2.1-A resolution.</title>
        <authorList>
            <person name="Sondek J."/>
            <person name="Bohm A."/>
            <person name="Lambright D.G."/>
            <person name="Hamm H.E."/>
            <person name="Sigler P.B."/>
        </authorList>
    </citation>
    <scope>X-RAY CRYSTALLOGRAPHY (2.1 ANGSTROMS) OF BETA-GAMMA DIMER</scope>
</reference>
<reference key="7">
    <citation type="journal article" date="1998" name="Structure">
        <title>Phosducin induces a structural change in transducin beta gamma.</title>
        <authorList>
            <person name="Loew A."/>
            <person name="Ho Y.K."/>
            <person name="Blundell T."/>
            <person name="Bax B."/>
        </authorList>
    </citation>
    <scope>X-RAY CRYSTALLOGRAPHY (2.8 ANGSTROMS) OF COMPLEX WITH PHOSDUCIN</scope>
</reference>
<reference key="8">
    <citation type="journal article" date="2003" name="Science">
        <title>Keeping G proteins at bay: a complex between G protein-coupled receptor kinase 2 and Gbetagamma.</title>
        <authorList>
            <person name="Lodowski D.T."/>
            <person name="Pitcher J.A."/>
            <person name="Capel W.D."/>
            <person name="Lefkowitz R.J."/>
            <person name="Tesmer J.J."/>
        </authorList>
    </citation>
    <scope>X-RAY CRYSTALLOGRAPHY (2.5 ANGSTROMS) OF COMPLEX WITH GRK2 AND GNG2</scope>
</reference>
<evidence type="ECO:0000250" key="1">
    <source>
        <dbReference type="UniProtKB" id="P62873"/>
    </source>
</evidence>
<evidence type="ECO:0000269" key="2">
    <source>
    </source>
</evidence>
<evidence type="ECO:0000269" key="3">
    <source>
    </source>
</evidence>
<evidence type="ECO:0000269" key="4">
    <source>
    </source>
</evidence>
<evidence type="ECO:0000305" key="5"/>
<evidence type="ECO:0007829" key="6">
    <source>
        <dbReference type="PDB" id="1GOT"/>
    </source>
</evidence>
<evidence type="ECO:0007829" key="7">
    <source>
        <dbReference type="PDB" id="2TRC"/>
    </source>
</evidence>
<evidence type="ECO:0007829" key="8">
    <source>
        <dbReference type="PDB" id="5KDO"/>
    </source>
</evidence>
<evidence type="ECO:0007829" key="9">
    <source>
        <dbReference type="PDB" id="6OYA"/>
    </source>
</evidence>
<evidence type="ECO:0007829" key="10">
    <source>
        <dbReference type="PDB" id="7JJO"/>
    </source>
</evidence>
<evidence type="ECO:0007829" key="11">
    <source>
        <dbReference type="PDB" id="7SQO"/>
    </source>
</evidence>
<evidence type="ECO:0007829" key="12">
    <source>
        <dbReference type="PDB" id="7TD0"/>
    </source>
</evidence>
<evidence type="ECO:0007829" key="13">
    <source>
        <dbReference type="PDB" id="8YH2"/>
    </source>
</evidence>
<evidence type="ECO:0007829" key="14">
    <source>
        <dbReference type="PDB" id="9CBL"/>
    </source>
</evidence>
<comment type="function">
    <text>Guanine nucleotide-binding proteins (G proteins) are involved as a modulator or transducer in various transmembrane signaling systems. The beta and gamma chains are required for the GTPase activity, for replacement of GDP by GTP, and for G protein-effector interaction.</text>
</comment>
<comment type="subunit">
    <text evidence="1 3 4">G proteins are composed of 3 units, alpha, beta and gamma (PubMed:8521505). The heterodimer formed by GNB1 and GNG2 interacts with ARHGEF5 (By similarity). The heterodimer formed by GNB1 and GNG2 interacts with GRK2 (PubMed:12764189). Forms a complex with GNAO1 and GNG3 (By similarity). Interacts with ARHGEF18 and RASD2 (By similarity). Forms complexes with TAS2R14 and G-proteins; these complexes play a role in the perception of bitterness (By similarity). Component of the TAS2R14-GNAI1 complex, consisting of TAS2R14, GNAI1, GNB1 and GNG2 (By similarity). Component of the TAS2R14-GNAT3 complex, consisting of TAS2R14, GNAT3, GNB1 and GNG2 (By similarity). Component of the TAS2R14-GNAS2 complex, consisting of TAS2R14, GNAS2, GNB1 and GNG2 (By similarity).</text>
</comment>
<comment type="interaction">
    <interactant intactId="EBI-357141">
        <id>P62871</id>
    </interactant>
    <interactant intactId="EBI-8309073">
        <id>P63097</id>
        <label>GNAI1</label>
    </interactant>
    <organismsDiffer>false</organismsDiffer>
    <experiments>3</experiments>
</comment>
<comment type="interaction">
    <interactant intactId="EBI-357141">
        <id>P62871</id>
    </interactant>
    <interactant intactId="EBI-1036424">
        <id>P63212</id>
        <label>GNG2</label>
    </interactant>
    <organismsDiffer>false</organismsDiffer>
    <experiments>6</experiments>
</comment>
<comment type="interaction">
    <interactant intactId="EBI-357141">
        <id>P62871</id>
    </interactant>
    <interactant intactId="EBI-8577979">
        <id>Q3T0Q4</id>
        <label>NME2</label>
    </interactant>
    <organismsDiffer>false</organismsDiffer>
    <experiments>3</experiments>
</comment>
<comment type="PTM">
    <text evidence="2">Phosphorylation at His-266 by NDKB contributes to G protein activation by increasing the high energetic phosphate transfer onto GDP.</text>
</comment>
<comment type="similarity">
    <text evidence="5">Belongs to the WD repeat G protein beta family.</text>
</comment>
<sequence>MSELDQLRQEAEQLKNQIRDARKACADATLSQITNNIDPVGRIQMRTRRTLRGHLAKIYAMHWGTDSRLLVSASQDGKLIIWDSYTTNKVHAIPLRSSWVMTCAYAPSGNYVACGGLDNICSIYNLKTREGNVRVSRELAGHTGYLSCCRFLDDNQIVTSSGDTTCALWDIETGQQTTTFTGHTGDVMSLSLAPDTRLFVSGACDASAKLWDVREGMCRQTFTGHESDINAICFFPNGNAFATGSDDATCRLFDLRADQELMTYSHDNIICGITSVSFSKSGRLLLAGYDDFNCNVWDALKADRAGVLAGHDNRVSCLGVTDDGMAVATGSWDSFLKIWN</sequence>
<name>GBB1_BOVIN</name>